<proteinExistence type="inferred from homology"/>
<organism>
    <name type="scientific">Aliivibrio fischeri (strain ATCC 700601 / ES114)</name>
    <name type="common">Vibrio fischeri</name>
    <dbReference type="NCBI Taxonomy" id="312309"/>
    <lineage>
        <taxon>Bacteria</taxon>
        <taxon>Pseudomonadati</taxon>
        <taxon>Pseudomonadota</taxon>
        <taxon>Gammaproteobacteria</taxon>
        <taxon>Vibrionales</taxon>
        <taxon>Vibrionaceae</taxon>
        <taxon>Aliivibrio</taxon>
    </lineage>
</organism>
<feature type="chain" id="PRO_0000194293" description="Guanosine-5'-triphosphate,3'-diphosphate pyrophosphatase">
    <location>
        <begin position="1"/>
        <end position="497"/>
    </location>
</feature>
<sequence length="497" mass="55115">MKSSTMSPMYAAIDLGSNSFHMLVVRHINGSVQTMAKIKRKVRLAAGLNENNTLSHEAMQRGWDCLSLFAERLQDIPVENIRIVGTATLRVASNVDIFLEKANQILGHNINVIEGEEEARMIYQGVAHTSGGNGRRLVVDIGGASTELIIGEGFEAQALTSLKMGCVTWLEGYFKDRALTQKNFNAAIAGAKETLAPILQQYTDLGWQTCVGASGTVQALQEIMLAQGMDEVITLAKLKRLQKQAMQYEHLEELDIDGLTLERALVFPSGLSILIAIFELLNIDSMTLAGGALREGLCYGMIDELQHDEVCQRTIKSTQQRYQLDVDYAQQVTDLSIQLVQQCGNDWLIEPQALPLLTAATQLHEIGMCIDYKKGGEHSAYLINALDLPGFTRAQKHLLGELLRRYREYFSAMPTQHAVSDISAQRMLRILRLAIILTHRRDVNLAPTVTLSEKNDVLSLSIDGAWLAANPLTRSELEIEADKQTNIGWELVIDARD</sequence>
<comment type="function">
    <text evidence="1">Catalyzes the conversion of pppGpp to ppGpp. Guanosine pentaphosphate (pppGpp) is a cytoplasmic signaling molecule which together with ppGpp controls the 'stringent response', an adaptive process that allows bacteria to respond to amino acid starvation, resulting in the coordinated regulation of numerous cellular activities.</text>
</comment>
<comment type="catalytic activity">
    <reaction evidence="1">
        <text>guanosine 3'-diphosphate 5'-triphosphate + H2O = guanosine 3',5'-bis(diphosphate) + phosphate + H(+)</text>
        <dbReference type="Rhea" id="RHEA:13073"/>
        <dbReference type="ChEBI" id="CHEBI:15377"/>
        <dbReference type="ChEBI" id="CHEBI:15378"/>
        <dbReference type="ChEBI" id="CHEBI:43474"/>
        <dbReference type="ChEBI" id="CHEBI:77828"/>
        <dbReference type="ChEBI" id="CHEBI:142410"/>
        <dbReference type="EC" id="3.6.1.40"/>
    </reaction>
</comment>
<comment type="pathway">
    <text evidence="1">Purine metabolism; ppGpp biosynthesis; ppGpp from GTP: step 2/2.</text>
</comment>
<comment type="similarity">
    <text evidence="1">Belongs to the GppA/Ppx family. GppA subfamily.</text>
</comment>
<evidence type="ECO:0000255" key="1">
    <source>
        <dbReference type="HAMAP-Rule" id="MF_01550"/>
    </source>
</evidence>
<gene>
    <name evidence="1" type="primary">gppA</name>
    <name type="ordered locus">VF_0054</name>
</gene>
<protein>
    <recommendedName>
        <fullName evidence="1">Guanosine-5'-triphosphate,3'-diphosphate pyrophosphatase</fullName>
        <ecNumber evidence="1">3.6.1.40</ecNumber>
    </recommendedName>
    <alternativeName>
        <fullName evidence="1">Guanosine pentaphosphate phosphohydrolase</fullName>
    </alternativeName>
    <alternativeName>
        <fullName evidence="1">pppGpp-5'-phosphohydrolase</fullName>
    </alternativeName>
</protein>
<accession>Q5E8U7</accession>
<dbReference type="EC" id="3.6.1.40" evidence="1"/>
<dbReference type="EMBL" id="CP000020">
    <property type="protein sequence ID" value="AAW84549.1"/>
    <property type="molecule type" value="Genomic_DNA"/>
</dbReference>
<dbReference type="RefSeq" id="WP_011260931.1">
    <property type="nucleotide sequence ID" value="NC_006840.2"/>
</dbReference>
<dbReference type="RefSeq" id="YP_203437.1">
    <property type="nucleotide sequence ID" value="NC_006840.2"/>
</dbReference>
<dbReference type="SMR" id="Q5E8U7"/>
<dbReference type="STRING" id="312309.VF_0054"/>
<dbReference type="EnsemblBacteria" id="AAW84549">
    <property type="protein sequence ID" value="AAW84549"/>
    <property type="gene ID" value="VF_0054"/>
</dbReference>
<dbReference type="GeneID" id="54162683"/>
<dbReference type="KEGG" id="vfi:VF_0054"/>
<dbReference type="PATRIC" id="fig|312309.11.peg.55"/>
<dbReference type="eggNOG" id="COG0248">
    <property type="taxonomic scope" value="Bacteria"/>
</dbReference>
<dbReference type="HOGENOM" id="CLU_025908_4_0_6"/>
<dbReference type="OrthoDB" id="9793035at2"/>
<dbReference type="UniPathway" id="UPA00908">
    <property type="reaction ID" value="UER00885"/>
</dbReference>
<dbReference type="Proteomes" id="UP000000537">
    <property type="component" value="Chromosome I"/>
</dbReference>
<dbReference type="GO" id="GO:0008894">
    <property type="term" value="F:guanosine-5'-triphosphate,3'-diphosphate diphosphatase activity"/>
    <property type="evidence" value="ECO:0007669"/>
    <property type="project" value="UniProtKB-UniRule"/>
</dbReference>
<dbReference type="GO" id="GO:0015974">
    <property type="term" value="P:guanosine pentaphosphate catabolic process"/>
    <property type="evidence" value="ECO:0007669"/>
    <property type="project" value="InterPro"/>
</dbReference>
<dbReference type="GO" id="GO:0015970">
    <property type="term" value="P:guanosine tetraphosphate biosynthetic process"/>
    <property type="evidence" value="ECO:0007669"/>
    <property type="project" value="UniProtKB-UniRule"/>
</dbReference>
<dbReference type="GO" id="GO:0015949">
    <property type="term" value="P:nucleobase-containing small molecule interconversion"/>
    <property type="evidence" value="ECO:0007669"/>
    <property type="project" value="TreeGrafter"/>
</dbReference>
<dbReference type="FunFam" id="3.30.420.150:FF:000001">
    <property type="entry name" value="Guanosine-5'-triphosphate,3'-diphosphate pyrophosphatase"/>
    <property type="match status" value="1"/>
</dbReference>
<dbReference type="FunFam" id="3.30.420.40:FF:000023">
    <property type="entry name" value="Guanosine-5'-triphosphate,3'-diphosphate pyrophosphatase"/>
    <property type="match status" value="1"/>
</dbReference>
<dbReference type="Gene3D" id="3.30.420.40">
    <property type="match status" value="1"/>
</dbReference>
<dbReference type="Gene3D" id="3.30.420.150">
    <property type="entry name" value="Exopolyphosphatase. Domain 2"/>
    <property type="match status" value="1"/>
</dbReference>
<dbReference type="Gene3D" id="1.10.3210.10">
    <property type="entry name" value="Hypothetical protein af1432"/>
    <property type="match status" value="1"/>
</dbReference>
<dbReference type="HAMAP" id="MF_01550">
    <property type="entry name" value="GppA"/>
    <property type="match status" value="1"/>
</dbReference>
<dbReference type="InterPro" id="IPR043129">
    <property type="entry name" value="ATPase_NBD"/>
</dbReference>
<dbReference type="InterPro" id="IPR050273">
    <property type="entry name" value="GppA/Ppx_hydrolase"/>
</dbReference>
<dbReference type="InterPro" id="IPR023709">
    <property type="entry name" value="Guo-5TP_3DP_PyrP"/>
</dbReference>
<dbReference type="InterPro" id="IPR048950">
    <property type="entry name" value="Ppx_GppA_C"/>
</dbReference>
<dbReference type="InterPro" id="IPR003695">
    <property type="entry name" value="Ppx_GppA_N"/>
</dbReference>
<dbReference type="InterPro" id="IPR030673">
    <property type="entry name" value="PyroPPase_GppA_Ppx"/>
</dbReference>
<dbReference type="NCBIfam" id="NF008260">
    <property type="entry name" value="PRK11031.1"/>
    <property type="match status" value="1"/>
</dbReference>
<dbReference type="PANTHER" id="PTHR30005">
    <property type="entry name" value="EXOPOLYPHOSPHATASE"/>
    <property type="match status" value="1"/>
</dbReference>
<dbReference type="PANTHER" id="PTHR30005:SF0">
    <property type="entry name" value="RETROGRADE REGULATION PROTEIN 2"/>
    <property type="match status" value="1"/>
</dbReference>
<dbReference type="Pfam" id="PF02541">
    <property type="entry name" value="Ppx-GppA"/>
    <property type="match status" value="1"/>
</dbReference>
<dbReference type="Pfam" id="PF21447">
    <property type="entry name" value="Ppx-GppA_III"/>
    <property type="match status" value="1"/>
</dbReference>
<dbReference type="PIRSF" id="PIRSF001267">
    <property type="entry name" value="Pyrophosphatase_GppA_Ppx"/>
    <property type="match status" value="1"/>
</dbReference>
<dbReference type="SUPFAM" id="SSF53067">
    <property type="entry name" value="Actin-like ATPase domain"/>
    <property type="match status" value="2"/>
</dbReference>
<dbReference type="SUPFAM" id="SSF109604">
    <property type="entry name" value="HD-domain/PDEase-like"/>
    <property type="match status" value="1"/>
</dbReference>
<reference key="1">
    <citation type="journal article" date="2005" name="Proc. Natl. Acad. Sci. U.S.A.">
        <title>Complete genome sequence of Vibrio fischeri: a symbiotic bacterium with pathogenic congeners.</title>
        <authorList>
            <person name="Ruby E.G."/>
            <person name="Urbanowski M."/>
            <person name="Campbell J."/>
            <person name="Dunn A."/>
            <person name="Faini M."/>
            <person name="Gunsalus R."/>
            <person name="Lostroh P."/>
            <person name="Lupp C."/>
            <person name="McCann J."/>
            <person name="Millikan D."/>
            <person name="Schaefer A."/>
            <person name="Stabb E."/>
            <person name="Stevens A."/>
            <person name="Visick K."/>
            <person name="Whistler C."/>
            <person name="Greenberg E.P."/>
        </authorList>
    </citation>
    <scope>NUCLEOTIDE SEQUENCE [LARGE SCALE GENOMIC DNA]</scope>
    <source>
        <strain>ATCC 700601 / ES114</strain>
    </source>
</reference>
<keyword id="KW-0378">Hydrolase</keyword>
<keyword id="KW-1185">Reference proteome</keyword>
<name>GPPA_ALIF1</name>